<sequence>MNYLFKNGRYMNEEGKIVATDLLVQDGKIAKVAENITADNAEVIDVNGKLIAPGLVDVHVHLREPGGEHKETIETGTLAAAKGGFTTICAMPNTRPVPDCREHMEDLQNRIKEKAHVNVLPYGAITVRQAGSEMTDFETLKELGAFAFTDDGVGVQDASMMLAAMKRAAKLNMAVVAHCEENTLINKGCVHEGKFSEKHGLNGIPSVCESVHIARDILLAEAADCHYHVCHVSTKGSVRVIRDAKRAGIKVTAEVTPHHLVLCEDDIPSADPNFKMNPPLRGKEDHAALIEGLLDGTIDMIATDHAPHTAEEKAQGIERAPFGITGFETAFPLLYTNLVKKGIITLEQLIQFLTEKPADTFGLEAGRLKEGRTADITIIDLEQEEEIDPTTFLSKGKNTPFAGWKCQGWPVMTIVGGKIAWQKESALV</sequence>
<accession>Q636D8</accession>
<name>PYRC_BACCZ</name>
<dbReference type="EC" id="3.5.2.3" evidence="1"/>
<dbReference type="EMBL" id="CP000001">
    <property type="protein sequence ID" value="AAU16619.1"/>
    <property type="molecule type" value="Genomic_DNA"/>
</dbReference>
<dbReference type="RefSeq" id="WP_001108374.1">
    <property type="nucleotide sequence ID" value="NZ_CP009968.1"/>
</dbReference>
<dbReference type="SMR" id="Q636D8"/>
<dbReference type="GeneID" id="93007223"/>
<dbReference type="KEGG" id="bcz:BCE33L3647"/>
<dbReference type="PATRIC" id="fig|288681.22.peg.1764"/>
<dbReference type="UniPathway" id="UPA00070">
    <property type="reaction ID" value="UER00117"/>
</dbReference>
<dbReference type="Proteomes" id="UP000002612">
    <property type="component" value="Chromosome"/>
</dbReference>
<dbReference type="GO" id="GO:0005737">
    <property type="term" value="C:cytoplasm"/>
    <property type="evidence" value="ECO:0007669"/>
    <property type="project" value="TreeGrafter"/>
</dbReference>
<dbReference type="GO" id="GO:0004038">
    <property type="term" value="F:allantoinase activity"/>
    <property type="evidence" value="ECO:0007669"/>
    <property type="project" value="TreeGrafter"/>
</dbReference>
<dbReference type="GO" id="GO:0004151">
    <property type="term" value="F:dihydroorotase activity"/>
    <property type="evidence" value="ECO:0007669"/>
    <property type="project" value="UniProtKB-UniRule"/>
</dbReference>
<dbReference type="GO" id="GO:0008270">
    <property type="term" value="F:zinc ion binding"/>
    <property type="evidence" value="ECO:0007669"/>
    <property type="project" value="UniProtKB-UniRule"/>
</dbReference>
<dbReference type="GO" id="GO:0044205">
    <property type="term" value="P:'de novo' UMP biosynthetic process"/>
    <property type="evidence" value="ECO:0007669"/>
    <property type="project" value="UniProtKB-UniRule"/>
</dbReference>
<dbReference type="GO" id="GO:0006145">
    <property type="term" value="P:purine nucleobase catabolic process"/>
    <property type="evidence" value="ECO:0007669"/>
    <property type="project" value="TreeGrafter"/>
</dbReference>
<dbReference type="CDD" id="cd01317">
    <property type="entry name" value="DHOase_IIa"/>
    <property type="match status" value="1"/>
</dbReference>
<dbReference type="FunFam" id="2.30.40.10:FF:000007">
    <property type="entry name" value="Dihydroorotase"/>
    <property type="match status" value="1"/>
</dbReference>
<dbReference type="FunFam" id="3.20.20.140:FF:000025">
    <property type="entry name" value="Dihydroorotase"/>
    <property type="match status" value="1"/>
</dbReference>
<dbReference type="Gene3D" id="3.20.20.140">
    <property type="entry name" value="Metal-dependent hydrolases"/>
    <property type="match status" value="1"/>
</dbReference>
<dbReference type="Gene3D" id="2.30.40.10">
    <property type="entry name" value="Urease, subunit C, domain 1"/>
    <property type="match status" value="2"/>
</dbReference>
<dbReference type="HAMAP" id="MF_00220_B">
    <property type="entry name" value="PyrC_classI_B"/>
    <property type="match status" value="1"/>
</dbReference>
<dbReference type="InterPro" id="IPR006680">
    <property type="entry name" value="Amidohydro-rel"/>
</dbReference>
<dbReference type="InterPro" id="IPR004722">
    <property type="entry name" value="DHOase"/>
</dbReference>
<dbReference type="InterPro" id="IPR050138">
    <property type="entry name" value="DHOase/Allantoinase_Hydrolase"/>
</dbReference>
<dbReference type="InterPro" id="IPR002195">
    <property type="entry name" value="Dihydroorotase_CS"/>
</dbReference>
<dbReference type="InterPro" id="IPR011059">
    <property type="entry name" value="Metal-dep_hydrolase_composite"/>
</dbReference>
<dbReference type="InterPro" id="IPR032466">
    <property type="entry name" value="Metal_Hydrolase"/>
</dbReference>
<dbReference type="NCBIfam" id="NF006837">
    <property type="entry name" value="PRK09357.1-2"/>
    <property type="match status" value="1"/>
</dbReference>
<dbReference type="NCBIfam" id="TIGR00857">
    <property type="entry name" value="pyrC_multi"/>
    <property type="match status" value="1"/>
</dbReference>
<dbReference type="PANTHER" id="PTHR43668">
    <property type="entry name" value="ALLANTOINASE"/>
    <property type="match status" value="1"/>
</dbReference>
<dbReference type="PANTHER" id="PTHR43668:SF2">
    <property type="entry name" value="ALLANTOINASE"/>
    <property type="match status" value="1"/>
</dbReference>
<dbReference type="Pfam" id="PF01979">
    <property type="entry name" value="Amidohydro_1"/>
    <property type="match status" value="1"/>
</dbReference>
<dbReference type="SUPFAM" id="SSF51338">
    <property type="entry name" value="Composite domain of metallo-dependent hydrolases"/>
    <property type="match status" value="1"/>
</dbReference>
<dbReference type="SUPFAM" id="SSF51556">
    <property type="entry name" value="Metallo-dependent hydrolases"/>
    <property type="match status" value="1"/>
</dbReference>
<dbReference type="PROSITE" id="PS00482">
    <property type="entry name" value="DIHYDROOROTASE_1"/>
    <property type="match status" value="1"/>
</dbReference>
<dbReference type="PROSITE" id="PS00483">
    <property type="entry name" value="DIHYDROOROTASE_2"/>
    <property type="match status" value="1"/>
</dbReference>
<proteinExistence type="inferred from homology"/>
<evidence type="ECO:0000255" key="1">
    <source>
        <dbReference type="HAMAP-Rule" id="MF_00220"/>
    </source>
</evidence>
<organism>
    <name type="scientific">Bacillus cereus (strain ZK / E33L)</name>
    <dbReference type="NCBI Taxonomy" id="288681"/>
    <lineage>
        <taxon>Bacteria</taxon>
        <taxon>Bacillati</taxon>
        <taxon>Bacillota</taxon>
        <taxon>Bacilli</taxon>
        <taxon>Bacillales</taxon>
        <taxon>Bacillaceae</taxon>
        <taxon>Bacillus</taxon>
        <taxon>Bacillus cereus group</taxon>
    </lineage>
</organism>
<gene>
    <name evidence="1" type="primary">pyrC</name>
    <name type="ordered locus">BCE33L3647</name>
</gene>
<reference key="1">
    <citation type="journal article" date="2006" name="J. Bacteriol.">
        <title>Pathogenomic sequence analysis of Bacillus cereus and Bacillus thuringiensis isolates closely related to Bacillus anthracis.</title>
        <authorList>
            <person name="Han C.S."/>
            <person name="Xie G."/>
            <person name="Challacombe J.F."/>
            <person name="Altherr M.R."/>
            <person name="Bhotika S.S."/>
            <person name="Bruce D."/>
            <person name="Campbell C.S."/>
            <person name="Campbell M.L."/>
            <person name="Chen J."/>
            <person name="Chertkov O."/>
            <person name="Cleland C."/>
            <person name="Dimitrijevic M."/>
            <person name="Doggett N.A."/>
            <person name="Fawcett J.J."/>
            <person name="Glavina T."/>
            <person name="Goodwin L.A."/>
            <person name="Hill K.K."/>
            <person name="Hitchcock P."/>
            <person name="Jackson P.J."/>
            <person name="Keim P."/>
            <person name="Kewalramani A.R."/>
            <person name="Longmire J."/>
            <person name="Lucas S."/>
            <person name="Malfatti S."/>
            <person name="McMurry K."/>
            <person name="Meincke L.J."/>
            <person name="Misra M."/>
            <person name="Moseman B.L."/>
            <person name="Mundt M."/>
            <person name="Munk A.C."/>
            <person name="Okinaka R.T."/>
            <person name="Parson-Quintana B."/>
            <person name="Reilly L.P."/>
            <person name="Richardson P."/>
            <person name="Robinson D.L."/>
            <person name="Rubin E."/>
            <person name="Saunders E."/>
            <person name="Tapia R."/>
            <person name="Tesmer J.G."/>
            <person name="Thayer N."/>
            <person name="Thompson L.S."/>
            <person name="Tice H."/>
            <person name="Ticknor L.O."/>
            <person name="Wills P.L."/>
            <person name="Brettin T.S."/>
            <person name="Gilna P."/>
        </authorList>
    </citation>
    <scope>NUCLEOTIDE SEQUENCE [LARGE SCALE GENOMIC DNA]</scope>
    <source>
        <strain>ZK / E33L</strain>
    </source>
</reference>
<comment type="function">
    <text evidence="1">Catalyzes the reversible cyclization of carbamoyl aspartate to dihydroorotate.</text>
</comment>
<comment type="catalytic activity">
    <reaction evidence="1">
        <text>(S)-dihydroorotate + H2O = N-carbamoyl-L-aspartate + H(+)</text>
        <dbReference type="Rhea" id="RHEA:24296"/>
        <dbReference type="ChEBI" id="CHEBI:15377"/>
        <dbReference type="ChEBI" id="CHEBI:15378"/>
        <dbReference type="ChEBI" id="CHEBI:30864"/>
        <dbReference type="ChEBI" id="CHEBI:32814"/>
        <dbReference type="EC" id="3.5.2.3"/>
    </reaction>
</comment>
<comment type="cofactor">
    <cofactor evidence="1">
        <name>Zn(2+)</name>
        <dbReference type="ChEBI" id="CHEBI:29105"/>
    </cofactor>
    <text evidence="1">Binds 2 Zn(2+) ions per subunit.</text>
</comment>
<comment type="pathway">
    <text evidence="1">Pyrimidine metabolism; UMP biosynthesis via de novo pathway; (S)-dihydroorotate from bicarbonate: step 3/3.</text>
</comment>
<comment type="similarity">
    <text evidence="1">Belongs to the metallo-dependent hydrolases superfamily. DHOase family. Class I DHOase subfamily.</text>
</comment>
<keyword id="KW-0378">Hydrolase</keyword>
<keyword id="KW-0479">Metal-binding</keyword>
<keyword id="KW-0665">Pyrimidine biosynthesis</keyword>
<keyword id="KW-0862">Zinc</keyword>
<feature type="chain" id="PRO_0000325585" description="Dihydroorotase">
    <location>
        <begin position="1"/>
        <end position="428"/>
    </location>
</feature>
<feature type="active site" evidence="1">
    <location>
        <position position="304"/>
    </location>
</feature>
<feature type="binding site" evidence="1">
    <location>
        <position position="59"/>
    </location>
    <ligand>
        <name>Zn(2+)</name>
        <dbReference type="ChEBI" id="CHEBI:29105"/>
        <label>1</label>
    </ligand>
</feature>
<feature type="binding site" evidence="1">
    <location>
        <begin position="61"/>
        <end position="63"/>
    </location>
    <ligand>
        <name>substrate</name>
    </ligand>
</feature>
<feature type="binding site" evidence="1">
    <location>
        <position position="61"/>
    </location>
    <ligand>
        <name>Zn(2+)</name>
        <dbReference type="ChEBI" id="CHEBI:29105"/>
        <label>1</label>
    </ligand>
</feature>
<feature type="binding site" evidence="1">
    <location>
        <position position="93"/>
    </location>
    <ligand>
        <name>substrate</name>
    </ligand>
</feature>
<feature type="binding site" evidence="1">
    <location>
        <position position="151"/>
    </location>
    <ligand>
        <name>Zn(2+)</name>
        <dbReference type="ChEBI" id="CHEBI:29105"/>
        <label>1</label>
    </ligand>
</feature>
<feature type="binding site" evidence="1">
    <location>
        <position position="151"/>
    </location>
    <ligand>
        <name>Zn(2+)</name>
        <dbReference type="ChEBI" id="CHEBI:29105"/>
        <label>2</label>
    </ligand>
</feature>
<feature type="binding site" evidence="1">
    <location>
        <position position="178"/>
    </location>
    <ligand>
        <name>Zn(2+)</name>
        <dbReference type="ChEBI" id="CHEBI:29105"/>
        <label>2</label>
    </ligand>
</feature>
<feature type="binding site" evidence="1">
    <location>
        <position position="231"/>
    </location>
    <ligand>
        <name>Zn(2+)</name>
        <dbReference type="ChEBI" id="CHEBI:29105"/>
        <label>2</label>
    </ligand>
</feature>
<feature type="binding site" evidence="1">
    <location>
        <position position="277"/>
    </location>
    <ligand>
        <name>substrate</name>
    </ligand>
</feature>
<feature type="binding site" evidence="1">
    <location>
        <position position="304"/>
    </location>
    <ligand>
        <name>Zn(2+)</name>
        <dbReference type="ChEBI" id="CHEBI:29105"/>
        <label>1</label>
    </ligand>
</feature>
<feature type="binding site" evidence="1">
    <location>
        <position position="308"/>
    </location>
    <ligand>
        <name>substrate</name>
    </ligand>
</feature>
<feature type="binding site" evidence="1">
    <location>
        <begin position="322"/>
        <end position="323"/>
    </location>
    <ligand>
        <name>substrate</name>
    </ligand>
</feature>
<protein>
    <recommendedName>
        <fullName evidence="1">Dihydroorotase</fullName>
        <shortName evidence="1">DHOase</shortName>
        <ecNumber evidence="1">3.5.2.3</ecNumber>
    </recommendedName>
</protein>